<gene>
    <name evidence="1" type="primary">rplL</name>
    <name type="ordered locus">YPDSF_3746</name>
</gene>
<name>RL7_YERPP</name>
<keyword id="KW-0687">Ribonucleoprotein</keyword>
<keyword id="KW-0689">Ribosomal protein</keyword>
<sequence>MSTITKDQILEGVAALSVMEIVELISAMEEKFGVSAAAVAAGPAAAVEAAEEQTEFDVVLASFGENKVAVIKAVRGATGLGLKEAKDLVESAPAVLKEGVNKDEAETLKKSLEEAGASVEIK</sequence>
<dbReference type="EMBL" id="CP000668">
    <property type="protein sequence ID" value="ABP42092.1"/>
    <property type="molecule type" value="Genomic_DNA"/>
</dbReference>
<dbReference type="RefSeq" id="WP_002210675.1">
    <property type="nucleotide sequence ID" value="NZ_CP009715.1"/>
</dbReference>
<dbReference type="SMR" id="A4TS30"/>
<dbReference type="GeneID" id="96663775"/>
<dbReference type="KEGG" id="ypp:YPDSF_3746"/>
<dbReference type="PATRIC" id="fig|386656.14.peg.777"/>
<dbReference type="GO" id="GO:0022625">
    <property type="term" value="C:cytosolic large ribosomal subunit"/>
    <property type="evidence" value="ECO:0007669"/>
    <property type="project" value="TreeGrafter"/>
</dbReference>
<dbReference type="GO" id="GO:0003729">
    <property type="term" value="F:mRNA binding"/>
    <property type="evidence" value="ECO:0007669"/>
    <property type="project" value="TreeGrafter"/>
</dbReference>
<dbReference type="GO" id="GO:0003735">
    <property type="term" value="F:structural constituent of ribosome"/>
    <property type="evidence" value="ECO:0007669"/>
    <property type="project" value="InterPro"/>
</dbReference>
<dbReference type="GO" id="GO:0006412">
    <property type="term" value="P:translation"/>
    <property type="evidence" value="ECO:0007669"/>
    <property type="project" value="UniProtKB-UniRule"/>
</dbReference>
<dbReference type="CDD" id="cd00387">
    <property type="entry name" value="Ribosomal_L7_L12"/>
    <property type="match status" value="1"/>
</dbReference>
<dbReference type="FunFam" id="3.30.1390.10:FF:000001">
    <property type="entry name" value="50S ribosomal protein L7/L12"/>
    <property type="match status" value="1"/>
</dbReference>
<dbReference type="Gene3D" id="3.30.1390.10">
    <property type="match status" value="1"/>
</dbReference>
<dbReference type="Gene3D" id="1.20.5.710">
    <property type="entry name" value="Single helix bin"/>
    <property type="match status" value="1"/>
</dbReference>
<dbReference type="HAMAP" id="MF_00368">
    <property type="entry name" value="Ribosomal_bL12"/>
    <property type="match status" value="1"/>
</dbReference>
<dbReference type="InterPro" id="IPR000206">
    <property type="entry name" value="Ribosomal_bL12"/>
</dbReference>
<dbReference type="InterPro" id="IPR013823">
    <property type="entry name" value="Ribosomal_bL12_C"/>
</dbReference>
<dbReference type="InterPro" id="IPR014719">
    <property type="entry name" value="Ribosomal_bL12_C/ClpS-like"/>
</dbReference>
<dbReference type="InterPro" id="IPR008932">
    <property type="entry name" value="Ribosomal_bL12_oligo"/>
</dbReference>
<dbReference type="InterPro" id="IPR036235">
    <property type="entry name" value="Ribosomal_bL12_oligo_N_sf"/>
</dbReference>
<dbReference type="NCBIfam" id="TIGR00855">
    <property type="entry name" value="L12"/>
    <property type="match status" value="1"/>
</dbReference>
<dbReference type="PANTHER" id="PTHR45987">
    <property type="entry name" value="39S RIBOSOMAL PROTEIN L12"/>
    <property type="match status" value="1"/>
</dbReference>
<dbReference type="PANTHER" id="PTHR45987:SF4">
    <property type="entry name" value="LARGE RIBOSOMAL SUBUNIT PROTEIN BL12M"/>
    <property type="match status" value="1"/>
</dbReference>
<dbReference type="Pfam" id="PF00542">
    <property type="entry name" value="Ribosomal_L12"/>
    <property type="match status" value="1"/>
</dbReference>
<dbReference type="Pfam" id="PF16320">
    <property type="entry name" value="Ribosomal_L12_N"/>
    <property type="match status" value="1"/>
</dbReference>
<dbReference type="SUPFAM" id="SSF54736">
    <property type="entry name" value="ClpS-like"/>
    <property type="match status" value="1"/>
</dbReference>
<dbReference type="SUPFAM" id="SSF48300">
    <property type="entry name" value="Ribosomal protein L7/12, oligomerisation (N-terminal) domain"/>
    <property type="match status" value="1"/>
</dbReference>
<accession>A4TS30</accession>
<comment type="function">
    <text evidence="1">Forms part of the ribosomal stalk which helps the ribosome interact with GTP-bound translation factors. Is thus essential for accurate translation.</text>
</comment>
<comment type="subunit">
    <text evidence="1">Homodimer. Part of the ribosomal stalk of the 50S ribosomal subunit. Forms a multimeric L10(L12)X complex, where L10 forms an elongated spine to which 2 to 4 L12 dimers bind in a sequential fashion. Binds GTP-bound translation factors.</text>
</comment>
<comment type="similarity">
    <text evidence="1">Belongs to the bacterial ribosomal protein bL12 family.</text>
</comment>
<organism>
    <name type="scientific">Yersinia pestis (strain Pestoides F)</name>
    <dbReference type="NCBI Taxonomy" id="386656"/>
    <lineage>
        <taxon>Bacteria</taxon>
        <taxon>Pseudomonadati</taxon>
        <taxon>Pseudomonadota</taxon>
        <taxon>Gammaproteobacteria</taxon>
        <taxon>Enterobacterales</taxon>
        <taxon>Yersiniaceae</taxon>
        <taxon>Yersinia</taxon>
    </lineage>
</organism>
<proteinExistence type="inferred from homology"/>
<evidence type="ECO:0000255" key="1">
    <source>
        <dbReference type="HAMAP-Rule" id="MF_00368"/>
    </source>
</evidence>
<evidence type="ECO:0000305" key="2"/>
<feature type="chain" id="PRO_1000007114" description="Large ribosomal subunit protein bL12">
    <location>
        <begin position="1"/>
        <end position="122"/>
    </location>
</feature>
<protein>
    <recommendedName>
        <fullName evidence="1">Large ribosomal subunit protein bL12</fullName>
    </recommendedName>
    <alternativeName>
        <fullName evidence="2">50S ribosomal protein L7/L12</fullName>
    </alternativeName>
</protein>
<reference key="1">
    <citation type="submission" date="2007-02" db="EMBL/GenBank/DDBJ databases">
        <title>Complete sequence of chromosome of Yersinia pestis Pestoides F.</title>
        <authorList>
            <consortium name="US DOE Joint Genome Institute"/>
            <person name="Copeland A."/>
            <person name="Lucas S."/>
            <person name="Lapidus A."/>
            <person name="Barry K."/>
            <person name="Detter J.C."/>
            <person name="Glavina del Rio T."/>
            <person name="Hammon N."/>
            <person name="Israni S."/>
            <person name="Dalin E."/>
            <person name="Tice H."/>
            <person name="Pitluck S."/>
            <person name="Di Bartolo G."/>
            <person name="Chain P."/>
            <person name="Malfatti S."/>
            <person name="Shin M."/>
            <person name="Vergez L."/>
            <person name="Schmutz J."/>
            <person name="Larimer F."/>
            <person name="Land M."/>
            <person name="Hauser L."/>
            <person name="Worsham P."/>
            <person name="Chu M."/>
            <person name="Bearden S."/>
            <person name="Garcia E."/>
            <person name="Richardson P."/>
        </authorList>
    </citation>
    <scope>NUCLEOTIDE SEQUENCE [LARGE SCALE GENOMIC DNA]</scope>
    <source>
        <strain>Pestoides F</strain>
    </source>
</reference>